<feature type="chain" id="PRO_0000190066" description="Golgin-84">
    <location>
        <begin position="1"/>
        <end position="516"/>
    </location>
</feature>
<feature type="topological domain" description="Cytoplasmic" evidence="2">
    <location>
        <begin position="1"/>
        <end position="492"/>
    </location>
</feature>
<feature type="transmembrane region" description="Helical; Anchor for type IV membrane protein" evidence="2">
    <location>
        <begin position="493"/>
        <end position="513"/>
    </location>
</feature>
<feature type="topological domain" description="Lumenal" evidence="2">
    <location>
        <begin position="514"/>
        <end position="516"/>
    </location>
</feature>
<feature type="region of interest" description="Disordered" evidence="3">
    <location>
        <begin position="28"/>
        <end position="80"/>
    </location>
</feature>
<feature type="coiled-coil region" evidence="2">
    <location>
        <begin position="108"/>
        <end position="423"/>
    </location>
</feature>
<feature type="compositionally biased region" description="Low complexity" evidence="3">
    <location>
        <begin position="42"/>
        <end position="80"/>
    </location>
</feature>
<feature type="modified residue" description="Phosphoserine" evidence="4">
    <location>
        <position position="64"/>
    </location>
</feature>
<feature type="modified residue" description="Phosphoserine" evidence="4">
    <location>
        <position position="74"/>
    </location>
</feature>
<feature type="sequence conflict" description="In Ref. 3; AAL48713." evidence="5" ref="3">
    <original>E</original>
    <variation>G</variation>
    <location>
        <position position="13"/>
    </location>
</feature>
<protein>
    <recommendedName>
        <fullName>Golgin-84</fullName>
    </recommendedName>
</protein>
<proteinExistence type="evidence at protein level"/>
<dbReference type="EMBL" id="AE014297">
    <property type="protein sequence ID" value="AAF56287.2"/>
    <property type="molecule type" value="Genomic_DNA"/>
</dbReference>
<dbReference type="EMBL" id="AY071091">
    <property type="protein sequence ID" value="AAL48713.1"/>
    <property type="molecule type" value="mRNA"/>
</dbReference>
<dbReference type="EMBL" id="AY071645">
    <property type="protein sequence ID" value="AAL49267.1"/>
    <property type="molecule type" value="mRNA"/>
</dbReference>
<dbReference type="RefSeq" id="NP_651250.2">
    <property type="nucleotide sequence ID" value="NM_142993.3"/>
</dbReference>
<dbReference type="SMR" id="Q8SZ63"/>
<dbReference type="BioGRID" id="67832">
    <property type="interactions" value="13"/>
</dbReference>
<dbReference type="FunCoup" id="Q8SZ63">
    <property type="interactions" value="132"/>
</dbReference>
<dbReference type="IntAct" id="Q8SZ63">
    <property type="interactions" value="7"/>
</dbReference>
<dbReference type="STRING" id="7227.FBpp0084013"/>
<dbReference type="iPTMnet" id="Q8SZ63"/>
<dbReference type="PaxDb" id="7227-FBpp0084013"/>
<dbReference type="EnsemblMetazoa" id="FBtr0084629">
    <property type="protein sequence ID" value="FBpp0084013"/>
    <property type="gene ID" value="FBgn0039188"/>
</dbReference>
<dbReference type="GeneID" id="42905"/>
<dbReference type="KEGG" id="dme:Dmel_CG17785"/>
<dbReference type="UCSC" id="CG17785-RA">
    <property type="organism name" value="d. melanogaster"/>
</dbReference>
<dbReference type="AGR" id="FB:FBgn0039188"/>
<dbReference type="CTD" id="42905"/>
<dbReference type="FlyBase" id="FBgn0039188">
    <property type="gene designation" value="Golgin84"/>
</dbReference>
<dbReference type="VEuPathDB" id="VectorBase:FBgn0039188"/>
<dbReference type="eggNOG" id="KOG4677">
    <property type="taxonomic scope" value="Eukaryota"/>
</dbReference>
<dbReference type="GeneTree" id="ENSGT00390000018470"/>
<dbReference type="HOGENOM" id="CLU_022484_0_0_1"/>
<dbReference type="InParanoid" id="Q8SZ63"/>
<dbReference type="OMA" id="AQLMVYN"/>
<dbReference type="OrthoDB" id="248903at2759"/>
<dbReference type="PhylomeDB" id="Q8SZ63"/>
<dbReference type="BioGRID-ORCS" id="42905">
    <property type="hits" value="0 hits in 1 CRISPR screen"/>
</dbReference>
<dbReference type="GenomeRNAi" id="42905"/>
<dbReference type="PRO" id="PR:Q8SZ63"/>
<dbReference type="Proteomes" id="UP000000803">
    <property type="component" value="Chromosome 3R"/>
</dbReference>
<dbReference type="Bgee" id="FBgn0039188">
    <property type="expression patterns" value="Expressed in mid-late elongation-stage spermatid (Drosophila) in testis and 69 other cell types or tissues"/>
</dbReference>
<dbReference type="GO" id="GO:0033106">
    <property type="term" value="C:cis-Golgi network membrane"/>
    <property type="evidence" value="ECO:0000314"/>
    <property type="project" value="FlyBase"/>
</dbReference>
<dbReference type="GO" id="GO:0005794">
    <property type="term" value="C:Golgi apparatus"/>
    <property type="evidence" value="ECO:0000250"/>
    <property type="project" value="UniProtKB"/>
</dbReference>
<dbReference type="GO" id="GO:0031985">
    <property type="term" value="C:Golgi cisterna"/>
    <property type="evidence" value="ECO:0000318"/>
    <property type="project" value="GO_Central"/>
</dbReference>
<dbReference type="GO" id="GO:0000139">
    <property type="term" value="C:Golgi membrane"/>
    <property type="evidence" value="ECO:0000318"/>
    <property type="project" value="GO_Central"/>
</dbReference>
<dbReference type="GO" id="GO:0038024">
    <property type="term" value="F:cargo receptor activity"/>
    <property type="evidence" value="ECO:0000315"/>
    <property type="project" value="FlyBase"/>
</dbReference>
<dbReference type="GO" id="GO:0042803">
    <property type="term" value="F:protein homodimerization activity"/>
    <property type="evidence" value="ECO:0000250"/>
    <property type="project" value="UniProtKB"/>
</dbReference>
<dbReference type="GO" id="GO:0031267">
    <property type="term" value="F:small GTPase binding"/>
    <property type="evidence" value="ECO:0000250"/>
    <property type="project" value="FlyBase"/>
</dbReference>
<dbReference type="GO" id="GO:0007030">
    <property type="term" value="P:Golgi organization"/>
    <property type="evidence" value="ECO:0000250"/>
    <property type="project" value="UniProtKB"/>
</dbReference>
<dbReference type="GO" id="GO:0048193">
    <property type="term" value="P:Golgi vesicle transport"/>
    <property type="evidence" value="ECO:0000250"/>
    <property type="project" value="UniProtKB"/>
</dbReference>
<dbReference type="GO" id="GO:0006891">
    <property type="term" value="P:intra-Golgi vesicle-mediated transport"/>
    <property type="evidence" value="ECO:0000315"/>
    <property type="project" value="FlyBase"/>
</dbReference>
<dbReference type="GO" id="GO:0000301">
    <property type="term" value="P:retrograde transport, vesicle recycling within Golgi"/>
    <property type="evidence" value="ECO:0000318"/>
    <property type="project" value="GO_Central"/>
</dbReference>
<dbReference type="GO" id="GO:0099041">
    <property type="term" value="P:vesicle tethering to Golgi"/>
    <property type="evidence" value="ECO:0000315"/>
    <property type="project" value="FlyBase"/>
</dbReference>
<dbReference type="InterPro" id="IPR019177">
    <property type="entry name" value="Golgin_subfamily_A_member_5"/>
</dbReference>
<dbReference type="PANTHER" id="PTHR13815:SF7">
    <property type="entry name" value="GOLGIN SUBFAMILY A MEMBER 5"/>
    <property type="match status" value="1"/>
</dbReference>
<dbReference type="PANTHER" id="PTHR13815">
    <property type="entry name" value="GOLGIN-84"/>
    <property type="match status" value="1"/>
</dbReference>
<dbReference type="Pfam" id="PF09787">
    <property type="entry name" value="Golgin_A5"/>
    <property type="match status" value="1"/>
</dbReference>
<accession>Q8SZ63</accession>
<accession>Q8SYC2</accession>
<accession>Q9VC88</accession>
<comment type="function">
    <text evidence="1">May be involved in maintaining Golgi structure and in intra-Golgi transport.</text>
</comment>
<comment type="subcellular location">
    <subcellularLocation>
        <location evidence="1">Golgi apparatus membrane</location>
        <topology evidence="1">Single-pass type IV membrane protein</topology>
    </subcellularLocation>
</comment>
<name>GOGA5_DROME</name>
<keyword id="KW-0175">Coiled coil</keyword>
<keyword id="KW-0333">Golgi apparatus</keyword>
<keyword id="KW-0472">Membrane</keyword>
<keyword id="KW-0597">Phosphoprotein</keyword>
<keyword id="KW-1185">Reference proteome</keyword>
<keyword id="KW-0812">Transmembrane</keyword>
<keyword id="KW-1133">Transmembrane helix</keyword>
<sequence>MSSWITGLADKAENILNKLDQNAATALQTENATGSADPMRRSMTSSTQSLSTSLKSTLSPVRRSGANSSSSVKSDGGVSVVTKDMRQKMTTSASFSNSPDISANSMDTNELAAFKIALNEITAERDELRLRLEDLNNETEKFDLHQHTQVLEALVKSLSEERDKAVHDYNEAQAANMAYVHSISELETNLAKLQQEYISAAHKLQMQTKETEQQRQELQEYRIKAQRALQAKDSLIAELKAKPTEEGADPNLVSKDSETRFLQIEHESLKQELEHANEELQKARLQLDDYVSQERQRQVELSSARQREETLAKELRQAREHSVTSESDQRVLTQELASLRQQLSNQMAAAATRLQEREQQLQQMRQRLSEEANTGAKSDYETRLKALTQSLVERQSLLERVTSERNALRLQHEKAQTQLQQNMHLVEMESQRGSSRHTMLNSTDDVKAQFPLLMHPSPFDNRVARRFKRALRQADSMGIRVGTFLRRYPMMRVSVIVYVALLHLWVMFVLLSTTPN</sequence>
<gene>
    <name type="primary">Golgin84</name>
    <name type="ORF">CG17785</name>
</gene>
<reference key="1">
    <citation type="journal article" date="2000" name="Science">
        <title>The genome sequence of Drosophila melanogaster.</title>
        <authorList>
            <person name="Adams M.D."/>
            <person name="Celniker S.E."/>
            <person name="Holt R.A."/>
            <person name="Evans C.A."/>
            <person name="Gocayne J.D."/>
            <person name="Amanatides P.G."/>
            <person name="Scherer S.E."/>
            <person name="Li P.W."/>
            <person name="Hoskins R.A."/>
            <person name="Galle R.F."/>
            <person name="George R.A."/>
            <person name="Lewis S.E."/>
            <person name="Richards S."/>
            <person name="Ashburner M."/>
            <person name="Henderson S.N."/>
            <person name="Sutton G.G."/>
            <person name="Wortman J.R."/>
            <person name="Yandell M.D."/>
            <person name="Zhang Q."/>
            <person name="Chen L.X."/>
            <person name="Brandon R.C."/>
            <person name="Rogers Y.-H.C."/>
            <person name="Blazej R.G."/>
            <person name="Champe M."/>
            <person name="Pfeiffer B.D."/>
            <person name="Wan K.H."/>
            <person name="Doyle C."/>
            <person name="Baxter E.G."/>
            <person name="Helt G."/>
            <person name="Nelson C.R."/>
            <person name="Miklos G.L.G."/>
            <person name="Abril J.F."/>
            <person name="Agbayani A."/>
            <person name="An H.-J."/>
            <person name="Andrews-Pfannkoch C."/>
            <person name="Baldwin D."/>
            <person name="Ballew R.M."/>
            <person name="Basu A."/>
            <person name="Baxendale J."/>
            <person name="Bayraktaroglu L."/>
            <person name="Beasley E.M."/>
            <person name="Beeson K.Y."/>
            <person name="Benos P.V."/>
            <person name="Berman B.P."/>
            <person name="Bhandari D."/>
            <person name="Bolshakov S."/>
            <person name="Borkova D."/>
            <person name="Botchan M.R."/>
            <person name="Bouck J."/>
            <person name="Brokstein P."/>
            <person name="Brottier P."/>
            <person name="Burtis K.C."/>
            <person name="Busam D.A."/>
            <person name="Butler H."/>
            <person name="Cadieu E."/>
            <person name="Center A."/>
            <person name="Chandra I."/>
            <person name="Cherry J.M."/>
            <person name="Cawley S."/>
            <person name="Dahlke C."/>
            <person name="Davenport L.B."/>
            <person name="Davies P."/>
            <person name="de Pablos B."/>
            <person name="Delcher A."/>
            <person name="Deng Z."/>
            <person name="Mays A.D."/>
            <person name="Dew I."/>
            <person name="Dietz S.M."/>
            <person name="Dodson K."/>
            <person name="Doup L.E."/>
            <person name="Downes M."/>
            <person name="Dugan-Rocha S."/>
            <person name="Dunkov B.C."/>
            <person name="Dunn P."/>
            <person name="Durbin K.J."/>
            <person name="Evangelista C.C."/>
            <person name="Ferraz C."/>
            <person name="Ferriera S."/>
            <person name="Fleischmann W."/>
            <person name="Fosler C."/>
            <person name="Gabrielian A.E."/>
            <person name="Garg N.S."/>
            <person name="Gelbart W.M."/>
            <person name="Glasser K."/>
            <person name="Glodek A."/>
            <person name="Gong F."/>
            <person name="Gorrell J.H."/>
            <person name="Gu Z."/>
            <person name="Guan P."/>
            <person name="Harris M."/>
            <person name="Harris N.L."/>
            <person name="Harvey D.A."/>
            <person name="Heiman T.J."/>
            <person name="Hernandez J.R."/>
            <person name="Houck J."/>
            <person name="Hostin D."/>
            <person name="Houston K.A."/>
            <person name="Howland T.J."/>
            <person name="Wei M.-H."/>
            <person name="Ibegwam C."/>
            <person name="Jalali M."/>
            <person name="Kalush F."/>
            <person name="Karpen G.H."/>
            <person name="Ke Z."/>
            <person name="Kennison J.A."/>
            <person name="Ketchum K.A."/>
            <person name="Kimmel B.E."/>
            <person name="Kodira C.D."/>
            <person name="Kraft C.L."/>
            <person name="Kravitz S."/>
            <person name="Kulp D."/>
            <person name="Lai Z."/>
            <person name="Lasko P."/>
            <person name="Lei Y."/>
            <person name="Levitsky A.A."/>
            <person name="Li J.H."/>
            <person name="Li Z."/>
            <person name="Liang Y."/>
            <person name="Lin X."/>
            <person name="Liu X."/>
            <person name="Mattei B."/>
            <person name="McIntosh T.C."/>
            <person name="McLeod M.P."/>
            <person name="McPherson D."/>
            <person name="Merkulov G."/>
            <person name="Milshina N.V."/>
            <person name="Mobarry C."/>
            <person name="Morris J."/>
            <person name="Moshrefi A."/>
            <person name="Mount S.M."/>
            <person name="Moy M."/>
            <person name="Murphy B."/>
            <person name="Murphy L."/>
            <person name="Muzny D.M."/>
            <person name="Nelson D.L."/>
            <person name="Nelson D.R."/>
            <person name="Nelson K.A."/>
            <person name="Nixon K."/>
            <person name="Nusskern D.R."/>
            <person name="Pacleb J.M."/>
            <person name="Palazzolo M."/>
            <person name="Pittman G.S."/>
            <person name="Pan S."/>
            <person name="Pollard J."/>
            <person name="Puri V."/>
            <person name="Reese M.G."/>
            <person name="Reinert K."/>
            <person name="Remington K."/>
            <person name="Saunders R.D.C."/>
            <person name="Scheeler F."/>
            <person name="Shen H."/>
            <person name="Shue B.C."/>
            <person name="Siden-Kiamos I."/>
            <person name="Simpson M."/>
            <person name="Skupski M.P."/>
            <person name="Smith T.J."/>
            <person name="Spier E."/>
            <person name="Spradling A.C."/>
            <person name="Stapleton M."/>
            <person name="Strong R."/>
            <person name="Sun E."/>
            <person name="Svirskas R."/>
            <person name="Tector C."/>
            <person name="Turner R."/>
            <person name="Venter E."/>
            <person name="Wang A.H."/>
            <person name="Wang X."/>
            <person name="Wang Z.-Y."/>
            <person name="Wassarman D.A."/>
            <person name="Weinstock G.M."/>
            <person name="Weissenbach J."/>
            <person name="Williams S.M."/>
            <person name="Woodage T."/>
            <person name="Worley K.C."/>
            <person name="Wu D."/>
            <person name="Yang S."/>
            <person name="Yao Q.A."/>
            <person name="Ye J."/>
            <person name="Yeh R.-F."/>
            <person name="Zaveri J.S."/>
            <person name="Zhan M."/>
            <person name="Zhang G."/>
            <person name="Zhao Q."/>
            <person name="Zheng L."/>
            <person name="Zheng X.H."/>
            <person name="Zhong F.N."/>
            <person name="Zhong W."/>
            <person name="Zhou X."/>
            <person name="Zhu S.C."/>
            <person name="Zhu X."/>
            <person name="Smith H.O."/>
            <person name="Gibbs R.A."/>
            <person name="Myers E.W."/>
            <person name="Rubin G.M."/>
            <person name="Venter J.C."/>
        </authorList>
    </citation>
    <scope>NUCLEOTIDE SEQUENCE [LARGE SCALE GENOMIC DNA]</scope>
    <source>
        <strain>Berkeley</strain>
    </source>
</reference>
<reference key="2">
    <citation type="journal article" date="2002" name="Genome Biol.">
        <title>Annotation of the Drosophila melanogaster euchromatic genome: a systematic review.</title>
        <authorList>
            <person name="Misra S."/>
            <person name="Crosby M.A."/>
            <person name="Mungall C.J."/>
            <person name="Matthews B.B."/>
            <person name="Campbell K.S."/>
            <person name="Hradecky P."/>
            <person name="Huang Y."/>
            <person name="Kaminker J.S."/>
            <person name="Millburn G.H."/>
            <person name="Prochnik S.E."/>
            <person name="Smith C.D."/>
            <person name="Tupy J.L."/>
            <person name="Whitfield E.J."/>
            <person name="Bayraktaroglu L."/>
            <person name="Berman B.P."/>
            <person name="Bettencourt B.R."/>
            <person name="Celniker S.E."/>
            <person name="de Grey A.D.N.J."/>
            <person name="Drysdale R.A."/>
            <person name="Harris N.L."/>
            <person name="Richter J."/>
            <person name="Russo S."/>
            <person name="Schroeder A.J."/>
            <person name="Shu S.Q."/>
            <person name="Stapleton M."/>
            <person name="Yamada C."/>
            <person name="Ashburner M."/>
            <person name="Gelbart W.M."/>
            <person name="Rubin G.M."/>
            <person name="Lewis S.E."/>
        </authorList>
    </citation>
    <scope>GENOME REANNOTATION</scope>
    <source>
        <strain>Berkeley</strain>
    </source>
</reference>
<reference key="3">
    <citation type="journal article" date="2002" name="Genome Biol.">
        <title>A Drosophila full-length cDNA resource.</title>
        <authorList>
            <person name="Stapleton M."/>
            <person name="Carlson J.W."/>
            <person name="Brokstein P."/>
            <person name="Yu C."/>
            <person name="Champe M."/>
            <person name="George R.A."/>
            <person name="Guarin H."/>
            <person name="Kronmiller B."/>
            <person name="Pacleb J.M."/>
            <person name="Park S."/>
            <person name="Wan K.H."/>
            <person name="Rubin G.M."/>
            <person name="Celniker S.E."/>
        </authorList>
    </citation>
    <scope>NUCLEOTIDE SEQUENCE [LARGE SCALE MRNA]</scope>
    <source>
        <strain>Berkeley</strain>
        <tissue>Embryo</tissue>
    </source>
</reference>
<reference key="4">
    <citation type="journal article" date="2002" name="Mol. Biol. Cell">
        <title>CASP, the alternatively spliced product of the gene encoding the CCAAT-displacement protein transcription factor, is a Golgi membrane protein related to giantin.</title>
        <authorList>
            <person name="Gillingham A.K."/>
            <person name="Pfeifer A.C."/>
            <person name="Munro S."/>
        </authorList>
    </citation>
    <scope>IDENTIFICATION</scope>
</reference>
<reference key="5">
    <citation type="journal article" date="2008" name="J. Proteome Res.">
        <title>Phosphoproteome analysis of Drosophila melanogaster embryos.</title>
        <authorList>
            <person name="Zhai B."/>
            <person name="Villen J."/>
            <person name="Beausoleil S.A."/>
            <person name="Mintseris J."/>
            <person name="Gygi S.P."/>
        </authorList>
    </citation>
    <scope>PHOSPHORYLATION [LARGE SCALE ANALYSIS] AT SER-64 AND SER-74</scope>
    <scope>IDENTIFICATION BY MASS SPECTROMETRY</scope>
    <source>
        <tissue>Embryo</tissue>
    </source>
</reference>
<evidence type="ECO:0000250" key="1"/>
<evidence type="ECO:0000255" key="2"/>
<evidence type="ECO:0000256" key="3">
    <source>
        <dbReference type="SAM" id="MobiDB-lite"/>
    </source>
</evidence>
<evidence type="ECO:0000269" key="4">
    <source>
    </source>
</evidence>
<evidence type="ECO:0000305" key="5"/>
<organism>
    <name type="scientific">Drosophila melanogaster</name>
    <name type="common">Fruit fly</name>
    <dbReference type="NCBI Taxonomy" id="7227"/>
    <lineage>
        <taxon>Eukaryota</taxon>
        <taxon>Metazoa</taxon>
        <taxon>Ecdysozoa</taxon>
        <taxon>Arthropoda</taxon>
        <taxon>Hexapoda</taxon>
        <taxon>Insecta</taxon>
        <taxon>Pterygota</taxon>
        <taxon>Neoptera</taxon>
        <taxon>Endopterygota</taxon>
        <taxon>Diptera</taxon>
        <taxon>Brachycera</taxon>
        <taxon>Muscomorpha</taxon>
        <taxon>Ephydroidea</taxon>
        <taxon>Drosophilidae</taxon>
        <taxon>Drosophila</taxon>
        <taxon>Sophophora</taxon>
    </lineage>
</organism>